<sequence>MPRSLKKGVFVDDHLLEKVLELNAKGEKRLIKTWSRRSTIVPEMVGHTIAVYNGKQHVPVYITENMVGHKLGEFAPTRTYRGHGKEAKATKKK</sequence>
<accession>P80381</accession>
<proteinExistence type="evidence at protein level"/>
<keyword id="KW-0002">3D-structure</keyword>
<keyword id="KW-0687">Ribonucleoprotein</keyword>
<keyword id="KW-0689">Ribosomal protein</keyword>
<keyword id="KW-0694">RNA-binding</keyword>
<keyword id="KW-0699">rRNA-binding</keyword>
<gene>
    <name type="primary">rpsS</name>
    <name type="synonym">rps19</name>
</gene>
<protein>
    <recommendedName>
        <fullName evidence="2">Small ribosomal subunit protein uS19</fullName>
    </recommendedName>
    <alternativeName>
        <fullName>30S ribosomal protein S19</fullName>
    </alternativeName>
</protein>
<dbReference type="EMBL" id="X84059">
    <property type="protein sequence ID" value="CAA58878.1"/>
    <property type="molecule type" value="Genomic_DNA"/>
</dbReference>
<dbReference type="RefSeq" id="WP_011173711.1">
    <property type="nucleotide sequence ID" value="NZ_VHHQ01000024.1"/>
</dbReference>
<dbReference type="PDB" id="1QKF">
    <property type="method" value="NMR"/>
    <property type="chains" value="A=2-93"/>
</dbReference>
<dbReference type="PDB" id="1QKH">
    <property type="method" value="NMR"/>
    <property type="chains" value="A=2-93"/>
</dbReference>
<dbReference type="PDB" id="4V4G">
    <property type="method" value="X-ray"/>
    <property type="resolution" value="11.50 A"/>
    <property type="chains" value="S=2-81"/>
</dbReference>
<dbReference type="PDB" id="4V8X">
    <property type="method" value="X-ray"/>
    <property type="resolution" value="3.35 A"/>
    <property type="chains" value="AS/CS=1-93"/>
</dbReference>
<dbReference type="PDBsum" id="1QKF"/>
<dbReference type="PDBsum" id="1QKH"/>
<dbReference type="PDBsum" id="4V4G"/>
<dbReference type="PDBsum" id="4V8X"/>
<dbReference type="BMRB" id="P80381"/>
<dbReference type="SMR" id="P80381"/>
<dbReference type="GeneID" id="93866431"/>
<dbReference type="OMA" id="KGPFVDP"/>
<dbReference type="EvolutionaryTrace" id="P80381"/>
<dbReference type="GO" id="GO:0005737">
    <property type="term" value="C:cytoplasm"/>
    <property type="evidence" value="ECO:0007669"/>
    <property type="project" value="UniProtKB-ARBA"/>
</dbReference>
<dbReference type="GO" id="GO:0015935">
    <property type="term" value="C:small ribosomal subunit"/>
    <property type="evidence" value="ECO:0007669"/>
    <property type="project" value="InterPro"/>
</dbReference>
<dbReference type="GO" id="GO:0019843">
    <property type="term" value="F:rRNA binding"/>
    <property type="evidence" value="ECO:0007669"/>
    <property type="project" value="UniProtKB-UniRule"/>
</dbReference>
<dbReference type="GO" id="GO:0003735">
    <property type="term" value="F:structural constituent of ribosome"/>
    <property type="evidence" value="ECO:0007669"/>
    <property type="project" value="InterPro"/>
</dbReference>
<dbReference type="GO" id="GO:0000028">
    <property type="term" value="P:ribosomal small subunit assembly"/>
    <property type="evidence" value="ECO:0007669"/>
    <property type="project" value="TreeGrafter"/>
</dbReference>
<dbReference type="GO" id="GO:0006412">
    <property type="term" value="P:translation"/>
    <property type="evidence" value="ECO:0007669"/>
    <property type="project" value="UniProtKB-UniRule"/>
</dbReference>
<dbReference type="FunFam" id="3.30.860.10:FF:000001">
    <property type="entry name" value="30S ribosomal protein S19"/>
    <property type="match status" value="1"/>
</dbReference>
<dbReference type="Gene3D" id="3.30.860.10">
    <property type="entry name" value="30s Ribosomal Protein S19, Chain A"/>
    <property type="match status" value="1"/>
</dbReference>
<dbReference type="HAMAP" id="MF_00531">
    <property type="entry name" value="Ribosomal_uS19"/>
    <property type="match status" value="1"/>
</dbReference>
<dbReference type="InterPro" id="IPR002222">
    <property type="entry name" value="Ribosomal_uS19"/>
</dbReference>
<dbReference type="InterPro" id="IPR005732">
    <property type="entry name" value="Ribosomal_uS19_bac-type"/>
</dbReference>
<dbReference type="InterPro" id="IPR020934">
    <property type="entry name" value="Ribosomal_uS19_CS"/>
</dbReference>
<dbReference type="InterPro" id="IPR023575">
    <property type="entry name" value="Ribosomal_uS19_SF"/>
</dbReference>
<dbReference type="NCBIfam" id="TIGR01050">
    <property type="entry name" value="rpsS_bact"/>
    <property type="match status" value="1"/>
</dbReference>
<dbReference type="PANTHER" id="PTHR11880">
    <property type="entry name" value="RIBOSOMAL PROTEIN S19P FAMILY MEMBER"/>
    <property type="match status" value="1"/>
</dbReference>
<dbReference type="PANTHER" id="PTHR11880:SF8">
    <property type="entry name" value="SMALL RIBOSOMAL SUBUNIT PROTEIN US19M"/>
    <property type="match status" value="1"/>
</dbReference>
<dbReference type="Pfam" id="PF00203">
    <property type="entry name" value="Ribosomal_S19"/>
    <property type="match status" value="1"/>
</dbReference>
<dbReference type="PIRSF" id="PIRSF002144">
    <property type="entry name" value="Ribosomal_S19"/>
    <property type="match status" value="1"/>
</dbReference>
<dbReference type="PRINTS" id="PR00975">
    <property type="entry name" value="RIBOSOMALS19"/>
</dbReference>
<dbReference type="SUPFAM" id="SSF54570">
    <property type="entry name" value="Ribosomal protein S19"/>
    <property type="match status" value="1"/>
</dbReference>
<dbReference type="PROSITE" id="PS00323">
    <property type="entry name" value="RIBOSOMAL_S19"/>
    <property type="match status" value="1"/>
</dbReference>
<evidence type="ECO:0000250" key="1"/>
<evidence type="ECO:0000305" key="2"/>
<evidence type="ECO:0007829" key="3">
    <source>
        <dbReference type="PDB" id="1QKF"/>
    </source>
</evidence>
<feature type="initiator methionine" description="Removed" evidence="1">
    <location>
        <position position="1"/>
    </location>
</feature>
<feature type="chain" id="PRO_0000129928" description="Small ribosomal subunit protein uS19">
    <location>
        <begin position="2"/>
        <end position="93"/>
    </location>
</feature>
<feature type="helix" evidence="3">
    <location>
        <begin position="13"/>
        <end position="25"/>
    </location>
</feature>
<feature type="strand" evidence="3">
    <location>
        <begin position="30"/>
        <end position="32"/>
    </location>
</feature>
<feature type="strand" evidence="3">
    <location>
        <begin position="35"/>
        <end position="37"/>
    </location>
</feature>
<feature type="helix" evidence="3">
    <location>
        <begin position="42"/>
        <end position="44"/>
    </location>
</feature>
<feature type="strand" evidence="3">
    <location>
        <begin position="47"/>
        <end position="52"/>
    </location>
</feature>
<feature type="strand" evidence="3">
    <location>
        <begin position="57"/>
        <end position="62"/>
    </location>
</feature>
<feature type="turn" evidence="3">
    <location>
        <begin position="64"/>
        <end position="68"/>
    </location>
</feature>
<feature type="strand" evidence="3">
    <location>
        <begin position="69"/>
        <end position="71"/>
    </location>
</feature>
<feature type="turn" evidence="3">
    <location>
        <begin position="72"/>
        <end position="74"/>
    </location>
</feature>
<name>RS19_THETH</name>
<organism>
    <name type="scientific">Thermus thermophilus</name>
    <dbReference type="NCBI Taxonomy" id="274"/>
    <lineage>
        <taxon>Bacteria</taxon>
        <taxon>Thermotogati</taxon>
        <taxon>Deinococcota</taxon>
        <taxon>Deinococci</taxon>
        <taxon>Thermales</taxon>
        <taxon>Thermaceae</taxon>
        <taxon>Thermus</taxon>
    </lineage>
</organism>
<comment type="function">
    <text evidence="1">Protein S19 forms a complex with S13 that binds strongly to the 16S ribosomal RNA.</text>
</comment>
<comment type="similarity">
    <text evidence="2">Belongs to the universal ribosomal protein uS19 family.</text>
</comment>
<reference key="1">
    <citation type="journal article" date="1997" name="FEBS Lett.">
        <title>Preliminary NMR studies of Thermus thermophilus ribosomal protein S19 overproduced in Escherichia coli.</title>
        <authorList>
            <person name="Davydova N.L."/>
            <person name="Rak A.V."/>
            <person name="Gryaznova O.I."/>
            <person name="Liljas A."/>
            <person name="Jonsson B.-H."/>
            <person name="Berglund H."/>
            <person name="Haerd T."/>
            <person name="Garber M.B."/>
        </authorList>
    </citation>
    <scope>NUCLEOTIDE SEQUENCE [GENOMIC DNA]</scope>
    <scope>STRUCTURE BY NMR</scope>
    <source>
        <strain>VK1</strain>
    </source>
</reference>
<reference key="2">
    <citation type="journal article" date="1999" name="J. Mol. Biol.">
        <title>Solution structure of the ribosomal protein S19 from Thermus thermophilus.</title>
        <authorList>
            <person name="Helgstrand M."/>
            <person name="Rak A.V."/>
            <person name="Allard P."/>
            <person name="Davydova N."/>
            <person name="Garber M.B."/>
            <person name="Haerd T."/>
        </authorList>
    </citation>
    <scope>STRUCTURE BY NMR</scope>
    <source>
        <strain>VK1</strain>
    </source>
</reference>